<organism evidence="3">
    <name type="scientific">Arabidopsis thaliana</name>
    <name type="common">Mouse-ear cress</name>
    <dbReference type="NCBI Taxonomy" id="3702"/>
    <lineage>
        <taxon>Eukaryota</taxon>
        <taxon>Viridiplantae</taxon>
        <taxon>Streptophyta</taxon>
        <taxon>Embryophyta</taxon>
        <taxon>Tracheophyta</taxon>
        <taxon>Spermatophyta</taxon>
        <taxon>Magnoliopsida</taxon>
        <taxon>eudicotyledons</taxon>
        <taxon>Gunneridae</taxon>
        <taxon>Pentapetalae</taxon>
        <taxon>rosids</taxon>
        <taxon>malvids</taxon>
        <taxon>Brassicales</taxon>
        <taxon>Brassicaceae</taxon>
        <taxon>Camelineae</taxon>
        <taxon>Arabidopsis</taxon>
    </lineage>
</organism>
<keyword id="KW-0929">Antimicrobial</keyword>
<keyword id="KW-1015">Disulfide bond</keyword>
<keyword id="KW-0295">Fungicide</keyword>
<keyword id="KW-0611">Plant defense</keyword>
<keyword id="KW-1185">Reference proteome</keyword>
<keyword id="KW-0964">Secreted</keyword>
<keyword id="KW-0732">Signal</keyword>
<evidence type="ECO:0000250" key="1"/>
<evidence type="ECO:0000255" key="2"/>
<evidence type="ECO:0000305" key="3"/>
<comment type="subcellular location">
    <subcellularLocation>
        <location evidence="1">Secreted</location>
    </subcellularLocation>
</comment>
<comment type="similarity">
    <text evidence="3">Belongs to the DEFL family.</text>
</comment>
<sequence>MKNSSILLLLVVFFVISSSGEAKTCSDGWTCLGPKEEDKCKENCMAKHKGVGTCNLYTIPEFPAPITYYMCDCMFDC</sequence>
<proteinExistence type="inferred from homology"/>
<name>DF185_ARATH</name>
<reference evidence="3" key="1">
    <citation type="journal article" date="2000" name="DNA Res.">
        <title>Structural analysis of Arabidopsis thaliana chromosome 3. I. Sequence features of the regions of 4,504,864 bp covered by sixty P1 and TAC clones.</title>
        <authorList>
            <person name="Sato S."/>
            <person name="Nakamura Y."/>
            <person name="Kaneko T."/>
            <person name="Katoh T."/>
            <person name="Asamizu E."/>
            <person name="Tabata S."/>
        </authorList>
    </citation>
    <scope>NUCLEOTIDE SEQUENCE [LARGE SCALE GENOMIC DNA]</scope>
    <source>
        <strain>cv. Columbia</strain>
    </source>
</reference>
<reference key="2">
    <citation type="journal article" date="2017" name="Plant J.">
        <title>Araport11: a complete reannotation of the Arabidopsis thaliana reference genome.</title>
        <authorList>
            <person name="Cheng C.Y."/>
            <person name="Krishnakumar V."/>
            <person name="Chan A.P."/>
            <person name="Thibaud-Nissen F."/>
            <person name="Schobel S."/>
            <person name="Town C.D."/>
        </authorList>
    </citation>
    <scope>GENOME REANNOTATION</scope>
    <source>
        <strain>cv. Columbia</strain>
    </source>
</reference>
<reference evidence="3" key="3">
    <citation type="journal article" date="2001" name="Plant Mol. Biol.">
        <title>Two large Arabidopsis thaliana gene families are homologous to the Brassica gene superfamily that encodes pollen coat proteins and the male component of the self-incompatibility response.</title>
        <authorList>
            <person name="Vanoosthuyse V."/>
            <person name="Miege C."/>
            <person name="Dumas C."/>
            <person name="Cock J.M."/>
        </authorList>
    </citation>
    <scope>IDENTIFICATION</scope>
</reference>
<reference key="4">
    <citation type="journal article" date="2005" name="Plant Physiol.">
        <title>Genome organization of more than 300 defensin-like genes in Arabidopsis.</title>
        <authorList>
            <person name="Silverstein K.A.T."/>
            <person name="Graham M.A."/>
            <person name="Paape T.D."/>
            <person name="VandenBosch K.A."/>
        </authorList>
    </citation>
    <scope>GENE FAMILY</scope>
</reference>
<dbReference type="EMBL" id="AB025608">
    <property type="status" value="NOT_ANNOTATED_CDS"/>
    <property type="molecule type" value="Genomic_DNA"/>
</dbReference>
<dbReference type="EMBL" id="CP002686">
    <property type="protein sequence ID" value="AEE76727.1"/>
    <property type="molecule type" value="Genomic_DNA"/>
</dbReference>
<dbReference type="RefSeq" id="NP_001030746.1">
    <property type="nucleotide sequence ID" value="NM_001035669.1"/>
</dbReference>
<dbReference type="STRING" id="3702.P82754"/>
<dbReference type="PaxDb" id="3702-AT3G23167.1"/>
<dbReference type="ProteomicsDB" id="224159"/>
<dbReference type="EnsemblPlants" id="AT3G23167.1">
    <property type="protein sequence ID" value="AT3G23167.1"/>
    <property type="gene ID" value="AT3G23167"/>
</dbReference>
<dbReference type="GeneID" id="3768907"/>
<dbReference type="Gramene" id="AT3G23167.1">
    <property type="protein sequence ID" value="AT3G23167.1"/>
    <property type="gene ID" value="AT3G23167"/>
</dbReference>
<dbReference type="KEGG" id="ath:AT3G23167"/>
<dbReference type="Araport" id="AT3G23167"/>
<dbReference type="TAIR" id="AT3G23167">
    <property type="gene designation" value="LCR39"/>
</dbReference>
<dbReference type="HOGENOM" id="CLU_199292_0_0_1"/>
<dbReference type="InParanoid" id="P82754"/>
<dbReference type="OMA" id="CKENCMA"/>
<dbReference type="PhylomeDB" id="P82754"/>
<dbReference type="PRO" id="PR:P82754"/>
<dbReference type="Proteomes" id="UP000006548">
    <property type="component" value="Chromosome 3"/>
</dbReference>
<dbReference type="ExpressionAtlas" id="P82754">
    <property type="expression patterns" value="baseline and differential"/>
</dbReference>
<dbReference type="GO" id="GO:0005576">
    <property type="term" value="C:extracellular region"/>
    <property type="evidence" value="ECO:0007669"/>
    <property type="project" value="UniProtKB-SubCell"/>
</dbReference>
<dbReference type="GO" id="GO:0050832">
    <property type="term" value="P:defense response to fungus"/>
    <property type="evidence" value="ECO:0007669"/>
    <property type="project" value="UniProtKB-KW"/>
</dbReference>
<dbReference type="GO" id="GO:0031640">
    <property type="term" value="P:killing of cells of another organism"/>
    <property type="evidence" value="ECO:0007669"/>
    <property type="project" value="UniProtKB-KW"/>
</dbReference>
<accession>P82754</accession>
<protein>
    <recommendedName>
        <fullName>Putative defensin-like protein 185</fullName>
    </recommendedName>
    <alternativeName>
        <fullName>Putative low-molecular-weight cysteine-rich protein 39</fullName>
        <shortName>Protein LCR39</shortName>
    </alternativeName>
</protein>
<feature type="signal peptide" evidence="2">
    <location>
        <begin position="1"/>
        <end position="22"/>
    </location>
</feature>
<feature type="chain" id="PRO_0000017278" description="Putative defensin-like protein 185">
    <location>
        <begin position="23"/>
        <end position="77"/>
    </location>
</feature>
<feature type="disulfide bond" evidence="1">
    <location>
        <begin position="25"/>
        <end position="77"/>
    </location>
</feature>
<feature type="disulfide bond" evidence="1">
    <location>
        <begin position="31"/>
        <end position="54"/>
    </location>
</feature>
<feature type="disulfide bond" evidence="1">
    <location>
        <begin position="40"/>
        <end position="71"/>
    </location>
</feature>
<feature type="disulfide bond" evidence="1">
    <location>
        <begin position="44"/>
        <end position="73"/>
    </location>
</feature>
<gene>
    <name type="primary">LCR39</name>
    <name type="ordered locus">At3g23167</name>
    <name type="ORF">K14B15</name>
</gene>